<keyword id="KW-0413">Isomerase</keyword>
<keyword id="KW-1185">Reference proteome</keyword>
<keyword id="KW-0819">tRNA processing</keyword>
<gene>
    <name evidence="1" type="primary">truA</name>
    <name type="ordered locus">SAV_4955</name>
</gene>
<protein>
    <recommendedName>
        <fullName evidence="1">tRNA pseudouridine synthase A</fullName>
        <ecNumber evidence="1">5.4.99.12</ecNumber>
    </recommendedName>
    <alternativeName>
        <fullName evidence="1">tRNA pseudouridine(38-40) synthase</fullName>
    </alternativeName>
    <alternativeName>
        <fullName evidence="1">tRNA pseudouridylate synthase I</fullName>
    </alternativeName>
    <alternativeName>
        <fullName evidence="1">tRNA-uridine isomerase I</fullName>
    </alternativeName>
</protein>
<accession>Q82DM1</accession>
<dbReference type="EC" id="5.4.99.12" evidence="1"/>
<dbReference type="EMBL" id="BA000030">
    <property type="protein sequence ID" value="BAC72667.1"/>
    <property type="molecule type" value="Genomic_DNA"/>
</dbReference>
<dbReference type="RefSeq" id="WP_010986361.1">
    <property type="nucleotide sequence ID" value="NZ_JZJK01000077.1"/>
</dbReference>
<dbReference type="SMR" id="Q82DM1"/>
<dbReference type="GeneID" id="41542038"/>
<dbReference type="KEGG" id="sma:SAVERM_4955"/>
<dbReference type="eggNOG" id="COG0101">
    <property type="taxonomic scope" value="Bacteria"/>
</dbReference>
<dbReference type="HOGENOM" id="CLU_014673_0_2_11"/>
<dbReference type="OrthoDB" id="9811823at2"/>
<dbReference type="Proteomes" id="UP000000428">
    <property type="component" value="Chromosome"/>
</dbReference>
<dbReference type="GO" id="GO:0003723">
    <property type="term" value="F:RNA binding"/>
    <property type="evidence" value="ECO:0007669"/>
    <property type="project" value="InterPro"/>
</dbReference>
<dbReference type="GO" id="GO:0160147">
    <property type="term" value="F:tRNA pseudouridine(38-40) synthase activity"/>
    <property type="evidence" value="ECO:0007669"/>
    <property type="project" value="UniProtKB-EC"/>
</dbReference>
<dbReference type="GO" id="GO:0031119">
    <property type="term" value="P:tRNA pseudouridine synthesis"/>
    <property type="evidence" value="ECO:0007669"/>
    <property type="project" value="UniProtKB-UniRule"/>
</dbReference>
<dbReference type="CDD" id="cd02570">
    <property type="entry name" value="PseudoU_synth_EcTruA"/>
    <property type="match status" value="1"/>
</dbReference>
<dbReference type="FunFam" id="3.30.70.580:FF:000008">
    <property type="entry name" value="tRNA pseudouridine synthase A"/>
    <property type="match status" value="1"/>
</dbReference>
<dbReference type="FunFam" id="3.30.70.660:FF:000003">
    <property type="entry name" value="tRNA pseudouridine synthase A"/>
    <property type="match status" value="1"/>
</dbReference>
<dbReference type="Gene3D" id="3.30.70.660">
    <property type="entry name" value="Pseudouridine synthase I, catalytic domain, C-terminal subdomain"/>
    <property type="match status" value="1"/>
</dbReference>
<dbReference type="Gene3D" id="3.30.70.580">
    <property type="entry name" value="Pseudouridine synthase I, catalytic domain, N-terminal subdomain"/>
    <property type="match status" value="1"/>
</dbReference>
<dbReference type="HAMAP" id="MF_00171">
    <property type="entry name" value="TruA"/>
    <property type="match status" value="1"/>
</dbReference>
<dbReference type="InterPro" id="IPR020103">
    <property type="entry name" value="PsdUridine_synth_cat_dom_sf"/>
</dbReference>
<dbReference type="InterPro" id="IPR001406">
    <property type="entry name" value="PsdUridine_synth_TruA"/>
</dbReference>
<dbReference type="InterPro" id="IPR020097">
    <property type="entry name" value="PsdUridine_synth_TruA_a/b_dom"/>
</dbReference>
<dbReference type="InterPro" id="IPR020095">
    <property type="entry name" value="PsdUridine_synth_TruA_C"/>
</dbReference>
<dbReference type="InterPro" id="IPR020094">
    <property type="entry name" value="TruA/RsuA/RluB/E/F_N"/>
</dbReference>
<dbReference type="NCBIfam" id="TIGR00071">
    <property type="entry name" value="hisT_truA"/>
    <property type="match status" value="1"/>
</dbReference>
<dbReference type="PANTHER" id="PTHR11142">
    <property type="entry name" value="PSEUDOURIDYLATE SYNTHASE"/>
    <property type="match status" value="1"/>
</dbReference>
<dbReference type="PANTHER" id="PTHR11142:SF0">
    <property type="entry name" value="TRNA PSEUDOURIDINE SYNTHASE-LIKE 1"/>
    <property type="match status" value="1"/>
</dbReference>
<dbReference type="Pfam" id="PF01416">
    <property type="entry name" value="PseudoU_synth_1"/>
    <property type="match status" value="2"/>
</dbReference>
<dbReference type="PIRSF" id="PIRSF001430">
    <property type="entry name" value="tRNA_psdUrid_synth"/>
    <property type="match status" value="1"/>
</dbReference>
<dbReference type="SUPFAM" id="SSF55120">
    <property type="entry name" value="Pseudouridine synthase"/>
    <property type="match status" value="1"/>
</dbReference>
<name>TRUA_STRAW</name>
<proteinExistence type="inferred from homology"/>
<organism>
    <name type="scientific">Streptomyces avermitilis (strain ATCC 31267 / DSM 46492 / JCM 5070 / NBRC 14893 / NCIMB 12804 / NRRL 8165 / MA-4680)</name>
    <dbReference type="NCBI Taxonomy" id="227882"/>
    <lineage>
        <taxon>Bacteria</taxon>
        <taxon>Bacillati</taxon>
        <taxon>Actinomycetota</taxon>
        <taxon>Actinomycetes</taxon>
        <taxon>Kitasatosporales</taxon>
        <taxon>Streptomycetaceae</taxon>
        <taxon>Streptomyces</taxon>
    </lineage>
</organism>
<comment type="function">
    <text evidence="1">Formation of pseudouridine at positions 38, 39 and 40 in the anticodon stem and loop of transfer RNAs.</text>
</comment>
<comment type="catalytic activity">
    <reaction evidence="1">
        <text>uridine(38/39/40) in tRNA = pseudouridine(38/39/40) in tRNA</text>
        <dbReference type="Rhea" id="RHEA:22376"/>
        <dbReference type="Rhea" id="RHEA-COMP:10085"/>
        <dbReference type="Rhea" id="RHEA-COMP:10087"/>
        <dbReference type="ChEBI" id="CHEBI:65314"/>
        <dbReference type="ChEBI" id="CHEBI:65315"/>
        <dbReference type="EC" id="5.4.99.12"/>
    </reaction>
</comment>
<comment type="subunit">
    <text evidence="1">Homodimer.</text>
</comment>
<comment type="similarity">
    <text evidence="1">Belongs to the tRNA pseudouridine synthase TruA family.</text>
</comment>
<feature type="chain" id="PRO_0000057459" description="tRNA pseudouridine synthase A">
    <location>
        <begin position="1"/>
        <end position="285"/>
    </location>
</feature>
<feature type="active site" description="Nucleophile" evidence="1">
    <location>
        <position position="64"/>
    </location>
</feature>
<feature type="binding site" evidence="1">
    <location>
        <position position="125"/>
    </location>
    <ligand>
        <name>substrate</name>
    </ligand>
</feature>
<evidence type="ECO:0000255" key="1">
    <source>
        <dbReference type="HAMAP-Rule" id="MF_00171"/>
    </source>
</evidence>
<sequence length="285" mass="31388">MSDEVQPGFVRVRLDLSYDGTEFSGWAKQAAGRRTVQGEIEDALRTVTRSGETTYELTVAGRTDAGVHARGQVAHVDLPGELWAEHQEKLLKRLAGRLPKDVRVWSLTEAPSGFNARFSAIWRRYAYRVTDNTGGVDPLLRSHVLWHDWPLDVDAMNEAARRLVGEHDFAAYCKKREGATTIRTLQELSLVRGDDGVITATVCADAFCHNMVRSLIGALLFVGDGHRGPDWPGKVLAVGVRDSAVHVVRPHGLTLEEVGYPADELLAARNKEARNKRTLPAAGCC</sequence>
<reference key="1">
    <citation type="journal article" date="2001" name="Proc. Natl. Acad. Sci. U.S.A.">
        <title>Genome sequence of an industrial microorganism Streptomyces avermitilis: deducing the ability of producing secondary metabolites.</title>
        <authorList>
            <person name="Omura S."/>
            <person name="Ikeda H."/>
            <person name="Ishikawa J."/>
            <person name="Hanamoto A."/>
            <person name="Takahashi C."/>
            <person name="Shinose M."/>
            <person name="Takahashi Y."/>
            <person name="Horikawa H."/>
            <person name="Nakazawa H."/>
            <person name="Osonoe T."/>
            <person name="Kikuchi H."/>
            <person name="Shiba T."/>
            <person name="Sakaki Y."/>
            <person name="Hattori M."/>
        </authorList>
    </citation>
    <scope>NUCLEOTIDE SEQUENCE [LARGE SCALE GENOMIC DNA]</scope>
    <source>
        <strain>ATCC 31267 / DSM 46492 / JCM 5070 / NBRC 14893 / NCIMB 12804 / NRRL 8165 / MA-4680</strain>
    </source>
</reference>
<reference key="2">
    <citation type="journal article" date="2003" name="Nat. Biotechnol.">
        <title>Complete genome sequence and comparative analysis of the industrial microorganism Streptomyces avermitilis.</title>
        <authorList>
            <person name="Ikeda H."/>
            <person name="Ishikawa J."/>
            <person name="Hanamoto A."/>
            <person name="Shinose M."/>
            <person name="Kikuchi H."/>
            <person name="Shiba T."/>
            <person name="Sakaki Y."/>
            <person name="Hattori M."/>
            <person name="Omura S."/>
        </authorList>
    </citation>
    <scope>NUCLEOTIDE SEQUENCE [LARGE SCALE GENOMIC DNA]</scope>
    <source>
        <strain>ATCC 31267 / DSM 46492 / JCM 5070 / NBRC 14893 / NCIMB 12804 / NRRL 8165 / MA-4680</strain>
    </source>
</reference>